<proteinExistence type="predicted"/>
<keyword id="KW-1185">Reference proteome</keyword>
<protein>
    <recommendedName>
        <fullName>Uncharacterized protein YrkE</fullName>
    </recommendedName>
</protein>
<organism>
    <name type="scientific">Bacillus subtilis (strain 168)</name>
    <dbReference type="NCBI Taxonomy" id="224308"/>
    <lineage>
        <taxon>Bacteria</taxon>
        <taxon>Bacillati</taxon>
        <taxon>Bacillota</taxon>
        <taxon>Bacilli</taxon>
        <taxon>Bacillales</taxon>
        <taxon>Bacillaceae</taxon>
        <taxon>Bacillus</taxon>
    </lineage>
</organism>
<dbReference type="EMBL" id="D84432">
    <property type="protein sequence ID" value="BAA12360.1"/>
    <property type="molecule type" value="Genomic_DNA"/>
</dbReference>
<dbReference type="EMBL" id="AL009126">
    <property type="protein sequence ID" value="CAB14595.1"/>
    <property type="molecule type" value="Genomic_DNA"/>
</dbReference>
<dbReference type="PIR" id="C69976">
    <property type="entry name" value="C69976"/>
</dbReference>
<dbReference type="RefSeq" id="NP_390531.1">
    <property type="nucleotide sequence ID" value="NC_000964.3"/>
</dbReference>
<dbReference type="RefSeq" id="WP_003229885.1">
    <property type="nucleotide sequence ID" value="NZ_OZ025638.1"/>
</dbReference>
<dbReference type="SMR" id="P54432"/>
<dbReference type="FunCoup" id="P54432">
    <property type="interactions" value="75"/>
</dbReference>
<dbReference type="STRING" id="224308.BSU26540"/>
<dbReference type="PaxDb" id="224308-BSU26540"/>
<dbReference type="EnsemblBacteria" id="CAB14595">
    <property type="protein sequence ID" value="CAB14595"/>
    <property type="gene ID" value="BSU_26540"/>
</dbReference>
<dbReference type="GeneID" id="937651"/>
<dbReference type="KEGG" id="bsu:BSU26540"/>
<dbReference type="PATRIC" id="fig|224308.179.peg.2882"/>
<dbReference type="eggNOG" id="COG2210">
    <property type="taxonomic scope" value="Bacteria"/>
</dbReference>
<dbReference type="InParanoid" id="P54432"/>
<dbReference type="OrthoDB" id="9802028at2"/>
<dbReference type="PhylomeDB" id="P54432"/>
<dbReference type="BioCyc" id="BSUB:BSU26540-MONOMER"/>
<dbReference type="Proteomes" id="UP000001570">
    <property type="component" value="Chromosome"/>
</dbReference>
<dbReference type="Gene3D" id="3.40.1260.10">
    <property type="entry name" value="DsrEFH-like"/>
    <property type="match status" value="1"/>
</dbReference>
<dbReference type="InterPro" id="IPR032836">
    <property type="entry name" value="DsrE2-like"/>
</dbReference>
<dbReference type="InterPro" id="IPR027396">
    <property type="entry name" value="DsrEFH-like"/>
</dbReference>
<dbReference type="PANTHER" id="PTHR34655">
    <property type="entry name" value="CONSERVED WITHIN P. AEROPHILUM"/>
    <property type="match status" value="1"/>
</dbReference>
<dbReference type="PANTHER" id="PTHR34655:SF2">
    <property type="entry name" value="PEROXIREDOXIN FAMILY PROTEIN"/>
    <property type="match status" value="1"/>
</dbReference>
<dbReference type="Pfam" id="PF13686">
    <property type="entry name" value="DrsE_2"/>
    <property type="match status" value="1"/>
</dbReference>
<dbReference type="SUPFAM" id="SSF75169">
    <property type="entry name" value="DsrEFH-like"/>
    <property type="match status" value="1"/>
</dbReference>
<name>YRKE_BACSU</name>
<reference key="1">
    <citation type="journal article" date="1996" name="Microbiology">
        <title>Systematic sequencing of the 283 kb 210 degrees-232 degrees region of the Bacillus subtilis genome containing the skin element and many sporulation genes.</title>
        <authorList>
            <person name="Mizuno M."/>
            <person name="Masuda S."/>
            <person name="Takemaru K."/>
            <person name="Hosono S."/>
            <person name="Sato T."/>
            <person name="Takeuchi M."/>
            <person name="Kobayashi Y."/>
        </authorList>
    </citation>
    <scope>NUCLEOTIDE SEQUENCE [GENOMIC DNA]</scope>
    <source>
        <strain>168 / JH642</strain>
    </source>
</reference>
<reference key="2">
    <citation type="journal article" date="1997" name="Nature">
        <title>The complete genome sequence of the Gram-positive bacterium Bacillus subtilis.</title>
        <authorList>
            <person name="Kunst F."/>
            <person name="Ogasawara N."/>
            <person name="Moszer I."/>
            <person name="Albertini A.M."/>
            <person name="Alloni G."/>
            <person name="Azevedo V."/>
            <person name="Bertero M.G."/>
            <person name="Bessieres P."/>
            <person name="Bolotin A."/>
            <person name="Borchert S."/>
            <person name="Borriss R."/>
            <person name="Boursier L."/>
            <person name="Brans A."/>
            <person name="Braun M."/>
            <person name="Brignell S.C."/>
            <person name="Bron S."/>
            <person name="Brouillet S."/>
            <person name="Bruschi C.V."/>
            <person name="Caldwell B."/>
            <person name="Capuano V."/>
            <person name="Carter N.M."/>
            <person name="Choi S.-K."/>
            <person name="Codani J.-J."/>
            <person name="Connerton I.F."/>
            <person name="Cummings N.J."/>
            <person name="Daniel R.A."/>
            <person name="Denizot F."/>
            <person name="Devine K.M."/>
            <person name="Duesterhoeft A."/>
            <person name="Ehrlich S.D."/>
            <person name="Emmerson P.T."/>
            <person name="Entian K.-D."/>
            <person name="Errington J."/>
            <person name="Fabret C."/>
            <person name="Ferrari E."/>
            <person name="Foulger D."/>
            <person name="Fritz C."/>
            <person name="Fujita M."/>
            <person name="Fujita Y."/>
            <person name="Fuma S."/>
            <person name="Galizzi A."/>
            <person name="Galleron N."/>
            <person name="Ghim S.-Y."/>
            <person name="Glaser P."/>
            <person name="Goffeau A."/>
            <person name="Golightly E.J."/>
            <person name="Grandi G."/>
            <person name="Guiseppi G."/>
            <person name="Guy B.J."/>
            <person name="Haga K."/>
            <person name="Haiech J."/>
            <person name="Harwood C.R."/>
            <person name="Henaut A."/>
            <person name="Hilbert H."/>
            <person name="Holsappel S."/>
            <person name="Hosono S."/>
            <person name="Hullo M.-F."/>
            <person name="Itaya M."/>
            <person name="Jones L.-M."/>
            <person name="Joris B."/>
            <person name="Karamata D."/>
            <person name="Kasahara Y."/>
            <person name="Klaerr-Blanchard M."/>
            <person name="Klein C."/>
            <person name="Kobayashi Y."/>
            <person name="Koetter P."/>
            <person name="Koningstein G."/>
            <person name="Krogh S."/>
            <person name="Kumano M."/>
            <person name="Kurita K."/>
            <person name="Lapidus A."/>
            <person name="Lardinois S."/>
            <person name="Lauber J."/>
            <person name="Lazarevic V."/>
            <person name="Lee S.-M."/>
            <person name="Levine A."/>
            <person name="Liu H."/>
            <person name="Masuda S."/>
            <person name="Mauel C."/>
            <person name="Medigue C."/>
            <person name="Medina N."/>
            <person name="Mellado R.P."/>
            <person name="Mizuno M."/>
            <person name="Moestl D."/>
            <person name="Nakai S."/>
            <person name="Noback M."/>
            <person name="Noone D."/>
            <person name="O'Reilly M."/>
            <person name="Ogawa K."/>
            <person name="Ogiwara A."/>
            <person name="Oudega B."/>
            <person name="Park S.-H."/>
            <person name="Parro V."/>
            <person name="Pohl T.M."/>
            <person name="Portetelle D."/>
            <person name="Porwollik S."/>
            <person name="Prescott A.M."/>
            <person name="Presecan E."/>
            <person name="Pujic P."/>
            <person name="Purnelle B."/>
            <person name="Rapoport G."/>
            <person name="Rey M."/>
            <person name="Reynolds S."/>
            <person name="Rieger M."/>
            <person name="Rivolta C."/>
            <person name="Rocha E."/>
            <person name="Roche B."/>
            <person name="Rose M."/>
            <person name="Sadaie Y."/>
            <person name="Sato T."/>
            <person name="Scanlan E."/>
            <person name="Schleich S."/>
            <person name="Schroeter R."/>
            <person name="Scoffone F."/>
            <person name="Sekiguchi J."/>
            <person name="Sekowska A."/>
            <person name="Seror S.J."/>
            <person name="Serror P."/>
            <person name="Shin B.-S."/>
            <person name="Soldo B."/>
            <person name="Sorokin A."/>
            <person name="Tacconi E."/>
            <person name="Takagi T."/>
            <person name="Takahashi H."/>
            <person name="Takemaru K."/>
            <person name="Takeuchi M."/>
            <person name="Tamakoshi A."/>
            <person name="Tanaka T."/>
            <person name="Terpstra P."/>
            <person name="Tognoni A."/>
            <person name="Tosato V."/>
            <person name="Uchiyama S."/>
            <person name="Vandenbol M."/>
            <person name="Vannier F."/>
            <person name="Vassarotti A."/>
            <person name="Viari A."/>
            <person name="Wambutt R."/>
            <person name="Wedler E."/>
            <person name="Wedler H."/>
            <person name="Weitzenegger T."/>
            <person name="Winters P."/>
            <person name="Wipat A."/>
            <person name="Yamamoto H."/>
            <person name="Yamane K."/>
            <person name="Yasumoto K."/>
            <person name="Yata K."/>
            <person name="Yoshida K."/>
            <person name="Yoshikawa H.-F."/>
            <person name="Zumstein E."/>
            <person name="Yoshikawa H."/>
            <person name="Danchin A."/>
        </authorList>
    </citation>
    <scope>NUCLEOTIDE SEQUENCE [LARGE SCALE GENOMIC DNA]</scope>
    <source>
        <strain>168</strain>
    </source>
</reference>
<sequence>MTEQTKRTTIVLFSGDYDKAMAAYIIANGAAAYDHEVTIFHTFWGFNALRKEELIPVKKGFLEKMFGKMMPRGADKMGLSKMNFAGMGPKMIKNVMKKHNVLTLPQLIEMAQEQGVKLVACTMTMDLLGLQEKELLDDIDYAGVAAYLADAEEGSVNLFI</sequence>
<accession>P54432</accession>
<feature type="chain" id="PRO_0000049871" description="Uncharacterized protein YrkE">
    <location>
        <begin position="1"/>
        <end position="160"/>
    </location>
</feature>
<gene>
    <name type="primary">yrkE</name>
    <name type="ordered locus">BSU26540</name>
</gene>